<feature type="chain" id="PRO_1000080153" description="Small ribosomal subunit protein bS16">
    <location>
        <begin position="1"/>
        <end position="88"/>
    </location>
</feature>
<gene>
    <name evidence="1" type="primary">rpsP</name>
    <name type="ordered locus">Gura_3763</name>
</gene>
<proteinExistence type="inferred from homology"/>
<organism>
    <name type="scientific">Geotalea uraniireducens (strain Rf4)</name>
    <name type="common">Geobacter uraniireducens</name>
    <dbReference type="NCBI Taxonomy" id="351605"/>
    <lineage>
        <taxon>Bacteria</taxon>
        <taxon>Pseudomonadati</taxon>
        <taxon>Thermodesulfobacteriota</taxon>
        <taxon>Desulfuromonadia</taxon>
        <taxon>Geobacterales</taxon>
        <taxon>Geobacteraceae</taxon>
        <taxon>Geotalea</taxon>
    </lineage>
</organism>
<name>RS16_GEOUR</name>
<comment type="similarity">
    <text evidence="1">Belongs to the bacterial ribosomal protein bS16 family.</text>
</comment>
<dbReference type="EMBL" id="CP000698">
    <property type="protein sequence ID" value="ABQ27916.1"/>
    <property type="molecule type" value="Genomic_DNA"/>
</dbReference>
<dbReference type="RefSeq" id="WP_011940565.1">
    <property type="nucleotide sequence ID" value="NC_009483.1"/>
</dbReference>
<dbReference type="SMR" id="A5G7Z8"/>
<dbReference type="STRING" id="351605.Gura_3763"/>
<dbReference type="KEGG" id="gur:Gura_3763"/>
<dbReference type="HOGENOM" id="CLU_100590_5_0_7"/>
<dbReference type="OrthoDB" id="9807878at2"/>
<dbReference type="Proteomes" id="UP000006695">
    <property type="component" value="Chromosome"/>
</dbReference>
<dbReference type="GO" id="GO:0005737">
    <property type="term" value="C:cytoplasm"/>
    <property type="evidence" value="ECO:0007669"/>
    <property type="project" value="UniProtKB-ARBA"/>
</dbReference>
<dbReference type="GO" id="GO:0015935">
    <property type="term" value="C:small ribosomal subunit"/>
    <property type="evidence" value="ECO:0007669"/>
    <property type="project" value="TreeGrafter"/>
</dbReference>
<dbReference type="GO" id="GO:0003735">
    <property type="term" value="F:structural constituent of ribosome"/>
    <property type="evidence" value="ECO:0007669"/>
    <property type="project" value="InterPro"/>
</dbReference>
<dbReference type="GO" id="GO:0006412">
    <property type="term" value="P:translation"/>
    <property type="evidence" value="ECO:0007669"/>
    <property type="project" value="UniProtKB-UniRule"/>
</dbReference>
<dbReference type="Gene3D" id="3.30.1320.10">
    <property type="match status" value="1"/>
</dbReference>
<dbReference type="HAMAP" id="MF_00385">
    <property type="entry name" value="Ribosomal_bS16"/>
    <property type="match status" value="1"/>
</dbReference>
<dbReference type="InterPro" id="IPR000307">
    <property type="entry name" value="Ribosomal_bS16"/>
</dbReference>
<dbReference type="InterPro" id="IPR020592">
    <property type="entry name" value="Ribosomal_bS16_CS"/>
</dbReference>
<dbReference type="InterPro" id="IPR023803">
    <property type="entry name" value="Ribosomal_bS16_dom_sf"/>
</dbReference>
<dbReference type="NCBIfam" id="TIGR00002">
    <property type="entry name" value="S16"/>
    <property type="match status" value="1"/>
</dbReference>
<dbReference type="PANTHER" id="PTHR12919">
    <property type="entry name" value="30S RIBOSOMAL PROTEIN S16"/>
    <property type="match status" value="1"/>
</dbReference>
<dbReference type="PANTHER" id="PTHR12919:SF20">
    <property type="entry name" value="SMALL RIBOSOMAL SUBUNIT PROTEIN BS16M"/>
    <property type="match status" value="1"/>
</dbReference>
<dbReference type="Pfam" id="PF00886">
    <property type="entry name" value="Ribosomal_S16"/>
    <property type="match status" value="1"/>
</dbReference>
<dbReference type="SUPFAM" id="SSF54565">
    <property type="entry name" value="Ribosomal protein S16"/>
    <property type="match status" value="1"/>
</dbReference>
<dbReference type="PROSITE" id="PS00732">
    <property type="entry name" value="RIBOSOMAL_S16"/>
    <property type="match status" value="1"/>
</dbReference>
<reference key="1">
    <citation type="submission" date="2007-05" db="EMBL/GenBank/DDBJ databases">
        <title>Complete sequence of Geobacter uraniireducens Rf4.</title>
        <authorList>
            <consortium name="US DOE Joint Genome Institute"/>
            <person name="Copeland A."/>
            <person name="Lucas S."/>
            <person name="Lapidus A."/>
            <person name="Barry K."/>
            <person name="Detter J.C."/>
            <person name="Glavina del Rio T."/>
            <person name="Hammon N."/>
            <person name="Israni S."/>
            <person name="Dalin E."/>
            <person name="Tice H."/>
            <person name="Pitluck S."/>
            <person name="Chertkov O."/>
            <person name="Brettin T."/>
            <person name="Bruce D."/>
            <person name="Han C."/>
            <person name="Schmutz J."/>
            <person name="Larimer F."/>
            <person name="Land M."/>
            <person name="Hauser L."/>
            <person name="Kyrpides N."/>
            <person name="Mikhailova N."/>
            <person name="Shelobolina E."/>
            <person name="Aklujkar M."/>
            <person name="Lovley D."/>
            <person name="Richardson P."/>
        </authorList>
    </citation>
    <scope>NUCLEOTIDE SEQUENCE [LARGE SCALE GENOMIC DNA]</scope>
    <source>
        <strain>ATCC BAA-1134 / JCM 13001 / Rf4</strain>
    </source>
</reference>
<evidence type="ECO:0000255" key="1">
    <source>
        <dbReference type="HAMAP-Rule" id="MF_00385"/>
    </source>
</evidence>
<evidence type="ECO:0000305" key="2"/>
<sequence length="88" mass="9965">MATKIRLARAGAKRKPFYQVVVADERCKRDGRFIENVGTYDPNQNPAVFKLEEAKTLEWLGKGAQPTDTVKQILKKAGIWEKFVSKLA</sequence>
<protein>
    <recommendedName>
        <fullName evidence="1">Small ribosomal subunit protein bS16</fullName>
    </recommendedName>
    <alternativeName>
        <fullName evidence="2">30S ribosomal protein S16</fullName>
    </alternativeName>
</protein>
<keyword id="KW-1185">Reference proteome</keyword>
<keyword id="KW-0687">Ribonucleoprotein</keyword>
<keyword id="KW-0689">Ribosomal protein</keyword>
<accession>A5G7Z8</accession>